<reference key="1">
    <citation type="journal article" date="2003" name="Mol. Microbiol.">
        <title>Genome-based analysis of virulence genes in a non-biofilm-forming Staphylococcus epidermidis strain (ATCC 12228).</title>
        <authorList>
            <person name="Zhang Y.-Q."/>
            <person name="Ren S.-X."/>
            <person name="Li H.-L."/>
            <person name="Wang Y.-X."/>
            <person name="Fu G."/>
            <person name="Yang J."/>
            <person name="Qin Z.-Q."/>
            <person name="Miao Y.-G."/>
            <person name="Wang W.-Y."/>
            <person name="Chen R.-S."/>
            <person name="Shen Y."/>
            <person name="Chen Z."/>
            <person name="Yuan Z.-H."/>
            <person name="Zhao G.-P."/>
            <person name="Qu D."/>
            <person name="Danchin A."/>
            <person name="Wen Y.-M."/>
        </authorList>
    </citation>
    <scope>NUCLEOTIDE SEQUENCE [LARGE SCALE GENOMIC DNA]</scope>
    <source>
        <strain>ATCC 12228 / FDA PCI 1200</strain>
    </source>
</reference>
<gene>
    <name evidence="1" type="primary">map</name>
    <name type="ordered locus">SE_1573</name>
</gene>
<protein>
    <recommendedName>
        <fullName evidence="1">Methionine aminopeptidase</fullName>
        <shortName evidence="1">MAP</shortName>
        <shortName evidence="1">MetAP</shortName>
        <ecNumber evidence="1">3.4.11.18</ecNumber>
    </recommendedName>
    <alternativeName>
        <fullName evidence="1">Peptidase M</fullName>
    </alternativeName>
</protein>
<proteinExistence type="inferred from homology"/>
<organism>
    <name type="scientific">Staphylococcus epidermidis (strain ATCC 12228 / FDA PCI 1200)</name>
    <dbReference type="NCBI Taxonomy" id="176280"/>
    <lineage>
        <taxon>Bacteria</taxon>
        <taxon>Bacillati</taxon>
        <taxon>Bacillota</taxon>
        <taxon>Bacilli</taxon>
        <taxon>Bacillales</taxon>
        <taxon>Staphylococcaceae</taxon>
        <taxon>Staphylococcus</taxon>
    </lineage>
</organism>
<sequence>MIVKTDEELQALKEIGYICAKVRDTMKEATKPGVTTRELDHIAKDLFEEHGAISAPIHDENFPGQTCISVNEEVAHGIPGKRVIREGDLVNIDVSALKNGYYADTGISFVVGKSDQPLKQKVCDVATMAFENAMKKVKPGTKLSNIGKAVHATARQNDLTVIKNLTGHGVGQSLHEAPNHVMNYFDPKDKTLLKEGQVIAVEPFISTHATFVTEGKNEWAFETKDKSYVAQIEHTVIVTKDGPLLTTKIDD</sequence>
<keyword id="KW-0031">Aminopeptidase</keyword>
<keyword id="KW-0378">Hydrolase</keyword>
<keyword id="KW-0479">Metal-binding</keyword>
<keyword id="KW-0645">Protease</keyword>
<dbReference type="EC" id="3.4.11.18" evidence="1"/>
<dbReference type="EMBL" id="AE015929">
    <property type="protein sequence ID" value="AAO05172.1"/>
    <property type="status" value="ALT_SEQ"/>
    <property type="molecule type" value="Genomic_DNA"/>
</dbReference>
<dbReference type="RefSeq" id="NP_765128.1">
    <property type="nucleotide sequence ID" value="NC_004461.1"/>
</dbReference>
<dbReference type="RefSeq" id="WP_002457092.1">
    <property type="nucleotide sequence ID" value="NZ_WBME01000010.1"/>
</dbReference>
<dbReference type="SMR" id="Q8CRU9"/>
<dbReference type="MEROPS" id="M24.036"/>
<dbReference type="GeneID" id="50018327"/>
<dbReference type="KEGG" id="sep:SE_1573"/>
<dbReference type="PATRIC" id="fig|176280.10.peg.1537"/>
<dbReference type="eggNOG" id="COG0024">
    <property type="taxonomic scope" value="Bacteria"/>
</dbReference>
<dbReference type="HOGENOM" id="CLU_015857_0_2_9"/>
<dbReference type="OrthoDB" id="9802055at2"/>
<dbReference type="Proteomes" id="UP000001411">
    <property type="component" value="Chromosome"/>
</dbReference>
<dbReference type="GO" id="GO:0004239">
    <property type="term" value="F:initiator methionyl aminopeptidase activity"/>
    <property type="evidence" value="ECO:0007669"/>
    <property type="project" value="UniProtKB-UniRule"/>
</dbReference>
<dbReference type="GO" id="GO:0046872">
    <property type="term" value="F:metal ion binding"/>
    <property type="evidence" value="ECO:0007669"/>
    <property type="project" value="UniProtKB-UniRule"/>
</dbReference>
<dbReference type="GO" id="GO:0070006">
    <property type="term" value="F:metalloaminopeptidase activity"/>
    <property type="evidence" value="ECO:0007669"/>
    <property type="project" value="UniProtKB-UniRule"/>
</dbReference>
<dbReference type="GO" id="GO:0006508">
    <property type="term" value="P:proteolysis"/>
    <property type="evidence" value="ECO:0007669"/>
    <property type="project" value="UniProtKB-KW"/>
</dbReference>
<dbReference type="CDD" id="cd01086">
    <property type="entry name" value="MetAP1"/>
    <property type="match status" value="1"/>
</dbReference>
<dbReference type="Gene3D" id="3.90.230.10">
    <property type="entry name" value="Creatinase/methionine aminopeptidase superfamily"/>
    <property type="match status" value="1"/>
</dbReference>
<dbReference type="HAMAP" id="MF_01974">
    <property type="entry name" value="MetAP_1"/>
    <property type="match status" value="1"/>
</dbReference>
<dbReference type="InterPro" id="IPR036005">
    <property type="entry name" value="Creatinase/aminopeptidase-like"/>
</dbReference>
<dbReference type="InterPro" id="IPR000994">
    <property type="entry name" value="Pept_M24"/>
</dbReference>
<dbReference type="InterPro" id="IPR001714">
    <property type="entry name" value="Pept_M24_MAP"/>
</dbReference>
<dbReference type="InterPro" id="IPR002467">
    <property type="entry name" value="Pept_M24A_MAP1"/>
</dbReference>
<dbReference type="NCBIfam" id="TIGR00500">
    <property type="entry name" value="met_pdase_I"/>
    <property type="match status" value="1"/>
</dbReference>
<dbReference type="PANTHER" id="PTHR43330">
    <property type="entry name" value="METHIONINE AMINOPEPTIDASE"/>
    <property type="match status" value="1"/>
</dbReference>
<dbReference type="PANTHER" id="PTHR43330:SF13">
    <property type="entry name" value="METHIONINE AMINOPEPTIDASE 2"/>
    <property type="match status" value="1"/>
</dbReference>
<dbReference type="Pfam" id="PF00557">
    <property type="entry name" value="Peptidase_M24"/>
    <property type="match status" value="1"/>
</dbReference>
<dbReference type="PRINTS" id="PR00599">
    <property type="entry name" value="MAPEPTIDASE"/>
</dbReference>
<dbReference type="SUPFAM" id="SSF55920">
    <property type="entry name" value="Creatinase/aminopeptidase"/>
    <property type="match status" value="1"/>
</dbReference>
<accession>Q8CRU9</accession>
<feature type="chain" id="PRO_0000148961" description="Methionine aminopeptidase">
    <location>
        <begin position="1"/>
        <end position="251"/>
    </location>
</feature>
<feature type="binding site" evidence="1">
    <location>
        <position position="76"/>
    </location>
    <ligand>
        <name>substrate</name>
    </ligand>
</feature>
<feature type="binding site" evidence="1">
    <location>
        <position position="93"/>
    </location>
    <ligand>
        <name>a divalent metal cation</name>
        <dbReference type="ChEBI" id="CHEBI:60240"/>
        <label>1</label>
    </ligand>
</feature>
<feature type="binding site" evidence="1">
    <location>
        <position position="104"/>
    </location>
    <ligand>
        <name>a divalent metal cation</name>
        <dbReference type="ChEBI" id="CHEBI:60240"/>
        <label>1</label>
    </ligand>
</feature>
<feature type="binding site" evidence="1">
    <location>
        <position position="104"/>
    </location>
    <ligand>
        <name>a divalent metal cation</name>
        <dbReference type="ChEBI" id="CHEBI:60240"/>
        <label>2</label>
        <note>catalytic</note>
    </ligand>
</feature>
<feature type="binding site" evidence="1">
    <location>
        <position position="168"/>
    </location>
    <ligand>
        <name>a divalent metal cation</name>
        <dbReference type="ChEBI" id="CHEBI:60240"/>
        <label>2</label>
        <note>catalytic</note>
    </ligand>
</feature>
<feature type="binding site" evidence="1">
    <location>
        <position position="175"/>
    </location>
    <ligand>
        <name>substrate</name>
    </ligand>
</feature>
<feature type="binding site" evidence="1">
    <location>
        <position position="202"/>
    </location>
    <ligand>
        <name>a divalent metal cation</name>
        <dbReference type="ChEBI" id="CHEBI:60240"/>
        <label>2</label>
        <note>catalytic</note>
    </ligand>
</feature>
<feature type="binding site" evidence="1">
    <location>
        <position position="233"/>
    </location>
    <ligand>
        <name>a divalent metal cation</name>
        <dbReference type="ChEBI" id="CHEBI:60240"/>
        <label>1</label>
    </ligand>
</feature>
<feature type="binding site" evidence="1">
    <location>
        <position position="233"/>
    </location>
    <ligand>
        <name>a divalent metal cation</name>
        <dbReference type="ChEBI" id="CHEBI:60240"/>
        <label>2</label>
        <note>catalytic</note>
    </ligand>
</feature>
<name>MAP1_STAES</name>
<comment type="function">
    <text evidence="1">Removes the N-terminal methionine from nascent proteins. The N-terminal methionine is often cleaved when the second residue in the primary sequence is small and uncharged (Met-Ala-, Cys, Gly, Pro, Ser, Thr, or Val). Requires deformylation of the N(alpha)-formylated initiator methionine before it can be hydrolyzed.</text>
</comment>
<comment type="catalytic activity">
    <reaction evidence="1">
        <text>Release of N-terminal amino acids, preferentially methionine, from peptides and arylamides.</text>
        <dbReference type="EC" id="3.4.11.18"/>
    </reaction>
</comment>
<comment type="cofactor">
    <cofactor evidence="1">
        <name>Co(2+)</name>
        <dbReference type="ChEBI" id="CHEBI:48828"/>
    </cofactor>
    <cofactor evidence="1">
        <name>Zn(2+)</name>
        <dbReference type="ChEBI" id="CHEBI:29105"/>
    </cofactor>
    <cofactor evidence="1">
        <name>Mn(2+)</name>
        <dbReference type="ChEBI" id="CHEBI:29035"/>
    </cofactor>
    <cofactor evidence="1">
        <name>Fe(2+)</name>
        <dbReference type="ChEBI" id="CHEBI:29033"/>
    </cofactor>
    <text evidence="1">Binds 2 divalent metal cations per subunit. Has a high-affinity and a low affinity metal-binding site. The true nature of the physiological cofactor is under debate. The enzyme is active with cobalt, zinc, manganese or divalent iron ions. Most likely, methionine aminopeptidases function as mononuclear Fe(2+)-metalloproteases under physiological conditions, and the catalytically relevant metal-binding site has been assigned to the histidine-containing high-affinity site.</text>
</comment>
<comment type="subunit">
    <text evidence="1">Monomer.</text>
</comment>
<comment type="similarity">
    <text evidence="1">Belongs to the peptidase M24A family. Methionine aminopeptidase type 1 subfamily.</text>
</comment>
<comment type="sequence caution" evidence="2">
    <conflict type="frameshift">
        <sequence resource="EMBL-CDS" id="AAO05172"/>
    </conflict>
</comment>
<evidence type="ECO:0000255" key="1">
    <source>
        <dbReference type="HAMAP-Rule" id="MF_01974"/>
    </source>
</evidence>
<evidence type="ECO:0000305" key="2"/>